<evidence type="ECO:0000250" key="1">
    <source>
        <dbReference type="UniProtKB" id="P0A1P6"/>
    </source>
</evidence>
<evidence type="ECO:0000250" key="2">
    <source>
        <dbReference type="UniProtKB" id="P12425"/>
    </source>
</evidence>
<evidence type="ECO:0000250" key="3">
    <source>
        <dbReference type="UniProtKB" id="P16580"/>
    </source>
</evidence>
<evidence type="ECO:0000250" key="4">
    <source>
        <dbReference type="UniProtKB" id="P9WN39"/>
    </source>
</evidence>
<evidence type="ECO:0000250" key="5">
    <source>
        <dbReference type="UniProtKB" id="Q02154"/>
    </source>
</evidence>
<evidence type="ECO:0000255" key="6">
    <source>
        <dbReference type="PROSITE-ProRule" id="PRU01330"/>
    </source>
</evidence>
<evidence type="ECO:0000255" key="7">
    <source>
        <dbReference type="PROSITE-ProRule" id="PRU01331"/>
    </source>
</evidence>
<evidence type="ECO:0000303" key="8">
    <source ref="1"/>
</evidence>
<evidence type="ECO:0000305" key="9"/>
<evidence type="ECO:0000305" key="10">
    <source ref="1"/>
</evidence>
<accession>P04772</accession>
<keyword id="KW-0067">ATP-binding</keyword>
<keyword id="KW-0963">Cytoplasm</keyword>
<keyword id="KW-0903">Direct protein sequencing</keyword>
<keyword id="KW-0436">Ligase</keyword>
<keyword id="KW-0460">Magnesium</keyword>
<keyword id="KW-0479">Metal-binding</keyword>
<keyword id="KW-0535">Nitrogen fixation</keyword>
<keyword id="KW-0547">Nucleotide-binding</keyword>
<keyword id="KW-1185">Reference proteome</keyword>
<proteinExistence type="evidence at protein level"/>
<comment type="function">
    <text evidence="5">Catalyzes the ATP-dependent biosynthesis of glutamine from glutamate and ammonia.</text>
</comment>
<comment type="catalytic activity">
    <reaction evidence="3">
        <text>L-glutamate + NH4(+) + ATP = L-glutamine + ADP + phosphate + H(+)</text>
        <dbReference type="Rhea" id="RHEA:16169"/>
        <dbReference type="ChEBI" id="CHEBI:15378"/>
        <dbReference type="ChEBI" id="CHEBI:28938"/>
        <dbReference type="ChEBI" id="CHEBI:29985"/>
        <dbReference type="ChEBI" id="CHEBI:30616"/>
        <dbReference type="ChEBI" id="CHEBI:43474"/>
        <dbReference type="ChEBI" id="CHEBI:58359"/>
        <dbReference type="ChEBI" id="CHEBI:456216"/>
        <dbReference type="EC" id="6.3.1.2"/>
    </reaction>
</comment>
<comment type="cofactor">
    <cofactor evidence="3">
        <name>Mg(2+)</name>
        <dbReference type="ChEBI" id="CHEBI:18420"/>
    </cofactor>
</comment>
<comment type="subunit">
    <text evidence="5">Homooctamer and homotetramer.</text>
</comment>
<comment type="subcellular location">
    <subcellularLocation>
        <location evidence="3">Cytoplasm</location>
    </subcellularLocation>
</comment>
<comment type="miscellaneous">
    <text evidence="10">Two forms of glutamine synthetase (GSI and GSII) can be found in this nitrogen fixing bacteria, GSI is a typical prokaryotic glutamine synthetase whereas GSII is similar to the eukaryotic enzyme.</text>
</comment>
<comment type="similarity">
    <text evidence="9">Belongs to the glutamine synthetase family.</text>
</comment>
<dbReference type="EC" id="6.3.1.2" evidence="3"/>
<dbReference type="EMBL" id="X04187">
    <property type="protein sequence ID" value="CAA27779.1"/>
    <property type="molecule type" value="Genomic_DNA"/>
</dbReference>
<dbReference type="EMBL" id="BA000040">
    <property type="protein sequence ID" value="BAC49434.1"/>
    <property type="molecule type" value="Genomic_DNA"/>
</dbReference>
<dbReference type="PIR" id="A24155">
    <property type="entry name" value="AJZJQ2"/>
</dbReference>
<dbReference type="RefSeq" id="NP_770809.1">
    <property type="nucleotide sequence ID" value="NC_004463.1"/>
</dbReference>
<dbReference type="RefSeq" id="WP_011086942.1">
    <property type="nucleotide sequence ID" value="NC_004463.1"/>
</dbReference>
<dbReference type="SMR" id="P04772"/>
<dbReference type="STRING" id="224911.AAV28_17885"/>
<dbReference type="EnsemblBacteria" id="BAC49434">
    <property type="protein sequence ID" value="BAC49434"/>
    <property type="gene ID" value="BAC49434"/>
</dbReference>
<dbReference type="GeneID" id="46491170"/>
<dbReference type="KEGG" id="bja:blr4169"/>
<dbReference type="PATRIC" id="fig|224911.44.peg.3887"/>
<dbReference type="eggNOG" id="COG0174">
    <property type="taxonomic scope" value="Bacteria"/>
</dbReference>
<dbReference type="HOGENOM" id="CLU_036762_1_0_5"/>
<dbReference type="InParanoid" id="P04772"/>
<dbReference type="OrthoDB" id="9807095at2"/>
<dbReference type="PhylomeDB" id="P04772"/>
<dbReference type="Proteomes" id="UP000002526">
    <property type="component" value="Chromosome"/>
</dbReference>
<dbReference type="GO" id="GO:0005737">
    <property type="term" value="C:cytoplasm"/>
    <property type="evidence" value="ECO:0000318"/>
    <property type="project" value="GO_Central"/>
</dbReference>
<dbReference type="GO" id="GO:0005524">
    <property type="term" value="F:ATP binding"/>
    <property type="evidence" value="ECO:0007669"/>
    <property type="project" value="UniProtKB-KW"/>
</dbReference>
<dbReference type="GO" id="GO:0004356">
    <property type="term" value="F:glutamine synthetase activity"/>
    <property type="evidence" value="ECO:0000318"/>
    <property type="project" value="GO_Central"/>
</dbReference>
<dbReference type="GO" id="GO:0046872">
    <property type="term" value="F:metal ion binding"/>
    <property type="evidence" value="ECO:0007669"/>
    <property type="project" value="UniProtKB-KW"/>
</dbReference>
<dbReference type="GO" id="GO:0006542">
    <property type="term" value="P:glutamine biosynthetic process"/>
    <property type="evidence" value="ECO:0000318"/>
    <property type="project" value="GO_Central"/>
</dbReference>
<dbReference type="GO" id="GO:0009399">
    <property type="term" value="P:nitrogen fixation"/>
    <property type="evidence" value="ECO:0007669"/>
    <property type="project" value="UniProtKB-KW"/>
</dbReference>
<dbReference type="FunFam" id="3.30.590.10:FF:000011">
    <property type="entry name" value="Glutamine synthetase"/>
    <property type="match status" value="1"/>
</dbReference>
<dbReference type="Gene3D" id="3.10.20.70">
    <property type="entry name" value="Glutamine synthetase, N-terminal domain"/>
    <property type="match status" value="1"/>
</dbReference>
<dbReference type="Gene3D" id="3.30.590.10">
    <property type="entry name" value="Glutamine synthetase/guanido kinase, catalytic domain"/>
    <property type="match status" value="1"/>
</dbReference>
<dbReference type="InterPro" id="IPR008147">
    <property type="entry name" value="Gln_synt_N"/>
</dbReference>
<dbReference type="InterPro" id="IPR036651">
    <property type="entry name" value="Gln_synt_N_sf"/>
</dbReference>
<dbReference type="InterPro" id="IPR014746">
    <property type="entry name" value="Gln_synth/guanido_kin_cat_dom"/>
</dbReference>
<dbReference type="InterPro" id="IPR008146">
    <property type="entry name" value="Gln_synth_cat_dom"/>
</dbReference>
<dbReference type="InterPro" id="IPR027303">
    <property type="entry name" value="Gln_synth_gly_rich_site"/>
</dbReference>
<dbReference type="InterPro" id="IPR027302">
    <property type="entry name" value="Gln_synth_N_conserv_site"/>
</dbReference>
<dbReference type="InterPro" id="IPR050292">
    <property type="entry name" value="Glutamine_Synthetase"/>
</dbReference>
<dbReference type="PANTHER" id="PTHR20852">
    <property type="entry name" value="GLUTAMINE SYNTHETASE"/>
    <property type="match status" value="1"/>
</dbReference>
<dbReference type="PANTHER" id="PTHR20852:SF57">
    <property type="entry name" value="GLUTAMINE SYNTHETASE 2 CYTOPLASMIC"/>
    <property type="match status" value="1"/>
</dbReference>
<dbReference type="Pfam" id="PF00120">
    <property type="entry name" value="Gln-synt_C"/>
    <property type="match status" value="1"/>
</dbReference>
<dbReference type="Pfam" id="PF03951">
    <property type="entry name" value="Gln-synt_N"/>
    <property type="match status" value="1"/>
</dbReference>
<dbReference type="SMART" id="SM01230">
    <property type="entry name" value="Gln-synt_C"/>
    <property type="match status" value="1"/>
</dbReference>
<dbReference type="SUPFAM" id="SSF54368">
    <property type="entry name" value="Glutamine synthetase, N-terminal domain"/>
    <property type="match status" value="1"/>
</dbReference>
<dbReference type="SUPFAM" id="SSF55931">
    <property type="entry name" value="Glutamine synthetase/guanido kinase"/>
    <property type="match status" value="1"/>
</dbReference>
<dbReference type="PROSITE" id="PS00180">
    <property type="entry name" value="GLNA_1"/>
    <property type="match status" value="1"/>
</dbReference>
<dbReference type="PROSITE" id="PS00181">
    <property type="entry name" value="GLNA_ATP"/>
    <property type="match status" value="1"/>
</dbReference>
<dbReference type="PROSITE" id="PS51986">
    <property type="entry name" value="GS_BETA_GRASP"/>
    <property type="match status" value="1"/>
</dbReference>
<dbReference type="PROSITE" id="PS51987">
    <property type="entry name" value="GS_CATALYTIC"/>
    <property type="match status" value="1"/>
</dbReference>
<sequence>MTKYKLEYIWLDGYTPTPNLRGKTQIKEFASFPTLEQLPLWGFDGSSTQQAEGHSSDCVLKPVAVFPDAARTNGVLVMCEVMMPDGKTPHASNKRATILDDAGAWFGFEQEYFFYKDGRPLGFPTSGYPAPQGPYYTGVGFSNVGDVARKIVEEHLDLCLAAGINHEGINAEVAKGQWEFQIFGKGSKKAADEMWMARYLMLRLTEKYGIDIEFHCKPLGDTDWNGSGMHANFSTEYMRTVGGKEYFEALMAAFDKNLMDHIAVYGPDNDKRLTGKHETAPWNKFSYGVADRGASIRVPHSFVNNGYKGYLEDRRPNSQGDPYQIASQILKTISSVPTEKKAVA</sequence>
<gene>
    <name evidence="8" type="primary">glnII</name>
    <name type="ordered locus">blr4169</name>
</gene>
<reference key="1">
    <citation type="journal article" date="1986" name="Nature">
        <title>Apparent eukaryotic origin of glutamine synthetase II from the bacterium Bradyrhizobium japonicum.</title>
        <authorList>
            <person name="Carlson T.A."/>
            <person name="Chelm B.K."/>
        </authorList>
    </citation>
    <scope>NUCLEOTIDE SEQUENCE [GENOMIC DNA]</scope>
    <scope>PROTEIN SEQUENCE OF 1-15</scope>
</reference>
<reference key="2">
    <citation type="journal article" date="2002" name="DNA Res.">
        <title>Complete genomic sequence of nitrogen-fixing symbiotic bacterium Bradyrhizobium japonicum USDA110.</title>
        <authorList>
            <person name="Kaneko T."/>
            <person name="Nakamura Y."/>
            <person name="Sato S."/>
            <person name="Minamisawa K."/>
            <person name="Uchiumi T."/>
            <person name="Sasamoto S."/>
            <person name="Watanabe A."/>
            <person name="Idesawa K."/>
            <person name="Iriguchi M."/>
            <person name="Kawashima K."/>
            <person name="Kohara M."/>
            <person name="Matsumoto M."/>
            <person name="Shimpo S."/>
            <person name="Tsuruoka H."/>
            <person name="Wada T."/>
            <person name="Yamada M."/>
            <person name="Tabata S."/>
        </authorList>
    </citation>
    <scope>NUCLEOTIDE SEQUENCE [LARGE SCALE GENOMIC DNA]</scope>
    <source>
        <strain>JCM 10833 / BCRC 13528 / IAM 13628 / NBRC 14792 / USDA 110</strain>
    </source>
</reference>
<feature type="chain" id="PRO_0000153220" description="Glutamine synthetase">
    <location>
        <begin position="1"/>
        <end position="344"/>
    </location>
</feature>
<feature type="domain" description="GS beta-grasp" evidence="6">
    <location>
        <begin position="4"/>
        <end position="86"/>
    </location>
</feature>
<feature type="domain" description="GS catalytic" evidence="7">
    <location>
        <begin position="89"/>
        <end position="344"/>
    </location>
</feature>
<feature type="binding site" evidence="2">
    <location>
        <position position="109"/>
    </location>
    <ligand>
        <name>Mg(2+)</name>
        <dbReference type="ChEBI" id="CHEBI:18420"/>
    </ligand>
</feature>
<feature type="binding site" evidence="2">
    <location>
        <position position="111"/>
    </location>
    <ligand>
        <name>Mg(2+)</name>
        <dbReference type="ChEBI" id="CHEBI:18420"/>
    </ligand>
</feature>
<feature type="binding site" evidence="4">
    <location>
        <position position="167"/>
    </location>
    <ligand>
        <name>ATP</name>
        <dbReference type="ChEBI" id="CHEBI:30616"/>
    </ligand>
</feature>
<feature type="binding site" evidence="2">
    <location>
        <position position="172"/>
    </location>
    <ligand>
        <name>Mg(2+)</name>
        <dbReference type="ChEBI" id="CHEBI:18420"/>
    </ligand>
</feature>
<feature type="binding site" evidence="2">
    <location>
        <position position="179"/>
    </location>
    <ligand>
        <name>Mg(2+)</name>
        <dbReference type="ChEBI" id="CHEBI:18420"/>
    </ligand>
</feature>
<feature type="binding site" evidence="1">
    <location>
        <position position="278"/>
    </location>
    <ligand>
        <name>L-glutamate</name>
        <dbReference type="ChEBI" id="CHEBI:29985"/>
    </ligand>
</feature>
<feature type="sequence conflict" description="In Ref. 1; CAA27779." evidence="9" ref="1">
    <original>QL</original>
    <variation>HV</variation>
    <location>
        <begin position="37"/>
        <end position="38"/>
    </location>
</feature>
<feature type="sequence conflict" description="In Ref. 1; CAA27779." evidence="9" ref="1">
    <original>ASQILKTISSVPTEKKAVA</original>
    <variation>VRRS</variation>
    <location>
        <begin position="326"/>
        <end position="344"/>
    </location>
</feature>
<protein>
    <recommendedName>
        <fullName evidence="8">Glutamine synthetase</fullName>
        <shortName evidence="8">GS</shortName>
        <ecNumber evidence="3">6.3.1.2</ecNumber>
    </recommendedName>
    <alternativeName>
        <fullName evidence="9">Glutamate--ammonia ligase</fullName>
    </alternativeName>
    <alternativeName>
        <fullName evidence="8">Glutamine synthetase II</fullName>
        <shortName evidence="8">GSII</shortName>
    </alternativeName>
</protein>
<name>GLNA2_BRADU</name>
<organism>
    <name type="scientific">Bradyrhizobium diazoefficiens (strain JCM 10833 / BCRC 13528 / IAM 13628 / NBRC 14792 / USDA 110)</name>
    <dbReference type="NCBI Taxonomy" id="224911"/>
    <lineage>
        <taxon>Bacteria</taxon>
        <taxon>Pseudomonadati</taxon>
        <taxon>Pseudomonadota</taxon>
        <taxon>Alphaproteobacteria</taxon>
        <taxon>Hyphomicrobiales</taxon>
        <taxon>Nitrobacteraceae</taxon>
        <taxon>Bradyrhizobium</taxon>
    </lineage>
</organism>